<gene>
    <name type="primary">RPL35A</name>
</gene>
<protein>
    <recommendedName>
        <fullName>Large ribosomal subunit protein eL33</fullName>
    </recommendedName>
    <alternativeName>
        <fullName>60S ribosomal protein L35a</fullName>
    </alternativeName>
</protein>
<evidence type="ECO:0000250" key="1">
    <source>
        <dbReference type="UniProtKB" id="O55142"/>
    </source>
</evidence>
<evidence type="ECO:0000250" key="2">
    <source>
        <dbReference type="UniProtKB" id="P18077"/>
    </source>
</evidence>
<evidence type="ECO:0000269" key="3">
    <source>
    </source>
</evidence>
<evidence type="ECO:0000269" key="4">
    <source>
    </source>
</evidence>
<evidence type="ECO:0000269" key="5">
    <source>
    </source>
</evidence>
<evidence type="ECO:0000269" key="6">
    <source>
    </source>
</evidence>
<evidence type="ECO:0000269" key="7">
    <source>
    </source>
</evidence>
<evidence type="ECO:0000269" key="8">
    <source>
    </source>
</evidence>
<evidence type="ECO:0000269" key="9">
    <source>
    </source>
</evidence>
<evidence type="ECO:0000269" key="10">
    <source>
    </source>
</evidence>
<evidence type="ECO:0000269" key="11">
    <source>
    </source>
</evidence>
<evidence type="ECO:0000269" key="12">
    <source>
    </source>
</evidence>
<evidence type="ECO:0000269" key="13">
    <source>
    </source>
</evidence>
<evidence type="ECO:0000269" key="14">
    <source>
    </source>
</evidence>
<evidence type="ECO:0000305" key="15"/>
<evidence type="ECO:0007744" key="16">
    <source>
        <dbReference type="PDB" id="3JAG"/>
    </source>
</evidence>
<evidence type="ECO:0007744" key="17">
    <source>
        <dbReference type="PDB" id="3JAH"/>
    </source>
</evidence>
<evidence type="ECO:0007744" key="18">
    <source>
        <dbReference type="PDB" id="5LZS"/>
    </source>
</evidence>
<evidence type="ECO:0007744" key="19">
    <source>
        <dbReference type="PDB" id="5LZT"/>
    </source>
</evidence>
<evidence type="ECO:0007744" key="20">
    <source>
        <dbReference type="PDB" id="6D90"/>
    </source>
</evidence>
<evidence type="ECO:0007744" key="21">
    <source>
        <dbReference type="PDB" id="6D9J"/>
    </source>
</evidence>
<evidence type="ECO:0007744" key="22">
    <source>
        <dbReference type="PDB" id="6HCF"/>
    </source>
</evidence>
<evidence type="ECO:0007744" key="23">
    <source>
        <dbReference type="PDB" id="6HCJ"/>
    </source>
</evidence>
<evidence type="ECO:0007744" key="24">
    <source>
        <dbReference type="PDB" id="6MTB"/>
    </source>
</evidence>
<evidence type="ECO:0007744" key="25">
    <source>
        <dbReference type="PDB" id="6MTC"/>
    </source>
</evidence>
<evidence type="ECO:0007744" key="26">
    <source>
        <dbReference type="PDB" id="6P5I"/>
    </source>
</evidence>
<evidence type="ECO:0007744" key="27">
    <source>
        <dbReference type="PDB" id="6P5J"/>
    </source>
</evidence>
<evidence type="ECO:0007744" key="28">
    <source>
        <dbReference type="PDB" id="6R5Q"/>
    </source>
</evidence>
<evidence type="ECO:0007744" key="29">
    <source>
        <dbReference type="PDB" id="6R6G"/>
    </source>
</evidence>
<evidence type="ECO:0007744" key="30">
    <source>
        <dbReference type="PDB" id="6SGC"/>
    </source>
</evidence>
<evidence type="ECO:0007744" key="31">
    <source>
        <dbReference type="PDB" id="6ZVK"/>
    </source>
</evidence>
<evidence type="ECO:0007744" key="32">
    <source>
        <dbReference type="PDB" id="7A01"/>
    </source>
</evidence>
<evidence type="ECO:0007744" key="33">
    <source>
        <dbReference type="PDB" id="7OYD"/>
    </source>
</evidence>
<evidence type="ECO:0007744" key="34">
    <source>
        <dbReference type="PDB" id="7UCJ"/>
    </source>
</evidence>
<evidence type="ECO:0007744" key="35">
    <source>
        <dbReference type="PDB" id="7UCK"/>
    </source>
</evidence>
<evidence type="ECO:0007744" key="36">
    <source>
        <dbReference type="PDB" id="7ZJW"/>
    </source>
</evidence>
<evidence type="ECO:0007744" key="37">
    <source>
        <dbReference type="PDB" id="7ZJX"/>
    </source>
</evidence>
<feature type="chain" id="PRO_0000460124" description="Large ribosomal subunit protein eL33">
    <location>
        <begin position="1"/>
        <end position="110"/>
    </location>
</feature>
<feature type="modified residue" description="N6-acetyllysine" evidence="2">
    <location>
        <position position="8"/>
    </location>
</feature>
<feature type="modified residue" description="N6-acetyllysine; alternate" evidence="1">
    <location>
        <position position="63"/>
    </location>
</feature>
<feature type="modified residue" description="N6-succinyllysine; alternate" evidence="1">
    <location>
        <position position="63"/>
    </location>
</feature>
<dbReference type="EMBL" id="AAGW02013755">
    <property type="status" value="NOT_ANNOTATED_CDS"/>
    <property type="molecule type" value="Genomic_DNA"/>
</dbReference>
<dbReference type="RefSeq" id="NP_001192154.1">
    <property type="nucleotide sequence ID" value="NM_001205225.1"/>
</dbReference>
<dbReference type="RefSeq" id="XP_051714794.1">
    <property type="nucleotide sequence ID" value="XM_051858834.2"/>
</dbReference>
<dbReference type="RefSeq" id="XP_069927789.1">
    <property type="nucleotide sequence ID" value="XM_070071688.1"/>
</dbReference>
<dbReference type="RefSeq" id="XP_069927790.1">
    <property type="nucleotide sequence ID" value="XM_070071689.1"/>
</dbReference>
<dbReference type="RefSeq" id="XP_069927792.1">
    <property type="nucleotide sequence ID" value="XM_070071691.1"/>
</dbReference>
<dbReference type="PDB" id="3JAG">
    <property type="method" value="EM"/>
    <property type="resolution" value="3.65 A"/>
    <property type="chains" value="f=2-110"/>
</dbReference>
<dbReference type="PDB" id="3JAH">
    <property type="method" value="EM"/>
    <property type="resolution" value="3.45 A"/>
    <property type="chains" value="f=2-110"/>
</dbReference>
<dbReference type="PDB" id="3JAI">
    <property type="method" value="EM"/>
    <property type="resolution" value="3.65 A"/>
    <property type="chains" value="f=2-110"/>
</dbReference>
<dbReference type="PDB" id="5LZS">
    <property type="method" value="EM"/>
    <property type="resolution" value="3.31 A"/>
    <property type="chains" value="f=1-110"/>
</dbReference>
<dbReference type="PDB" id="5LZT">
    <property type="method" value="EM"/>
    <property type="resolution" value="3.65 A"/>
    <property type="chains" value="f=1-110"/>
</dbReference>
<dbReference type="PDB" id="5LZU">
    <property type="method" value="EM"/>
    <property type="resolution" value="3.75 A"/>
    <property type="chains" value="f=1-110"/>
</dbReference>
<dbReference type="PDB" id="5LZV">
    <property type="method" value="EM"/>
    <property type="resolution" value="3.35 A"/>
    <property type="chains" value="f=1-110"/>
</dbReference>
<dbReference type="PDB" id="5LZW">
    <property type="method" value="EM"/>
    <property type="resolution" value="3.53 A"/>
    <property type="chains" value="f=1-110"/>
</dbReference>
<dbReference type="PDB" id="5LZX">
    <property type="method" value="EM"/>
    <property type="resolution" value="3.67 A"/>
    <property type="chains" value="f=1-110"/>
</dbReference>
<dbReference type="PDB" id="5LZY">
    <property type="method" value="EM"/>
    <property type="resolution" value="3.99 A"/>
    <property type="chains" value="f=1-110"/>
</dbReference>
<dbReference type="PDB" id="5LZZ">
    <property type="method" value="EM"/>
    <property type="resolution" value="3.47 A"/>
    <property type="chains" value="f=1-110"/>
</dbReference>
<dbReference type="PDB" id="6D90">
    <property type="method" value="EM"/>
    <property type="resolution" value="3.20 A"/>
    <property type="chains" value="f=1-110"/>
</dbReference>
<dbReference type="PDB" id="6D9J">
    <property type="method" value="EM"/>
    <property type="resolution" value="3.20 A"/>
    <property type="chains" value="f=1-110"/>
</dbReference>
<dbReference type="PDB" id="6FTG">
    <property type="method" value="EM"/>
    <property type="resolution" value="9.10 A"/>
    <property type="chains" value="f=2-110"/>
</dbReference>
<dbReference type="PDB" id="6FTI">
    <property type="method" value="EM"/>
    <property type="resolution" value="4.20 A"/>
    <property type="chains" value="f=2-110"/>
</dbReference>
<dbReference type="PDB" id="6FTJ">
    <property type="method" value="EM"/>
    <property type="resolution" value="4.70 A"/>
    <property type="chains" value="f=2-110"/>
</dbReference>
<dbReference type="PDB" id="6HCF">
    <property type="method" value="EM"/>
    <property type="resolution" value="3.90 A"/>
    <property type="chains" value="f3=1-110"/>
</dbReference>
<dbReference type="PDB" id="6HCJ">
    <property type="method" value="EM"/>
    <property type="resolution" value="3.80 A"/>
    <property type="chains" value="f3=1-110"/>
</dbReference>
<dbReference type="PDB" id="6HCM">
    <property type="method" value="EM"/>
    <property type="resolution" value="6.80 A"/>
    <property type="chains" value="f3=1-110"/>
</dbReference>
<dbReference type="PDB" id="6HCQ">
    <property type="method" value="EM"/>
    <property type="resolution" value="6.50 A"/>
    <property type="chains" value="f3=1-110"/>
</dbReference>
<dbReference type="PDB" id="6MTB">
    <property type="method" value="EM"/>
    <property type="resolution" value="3.60 A"/>
    <property type="chains" value="f=2-110"/>
</dbReference>
<dbReference type="PDB" id="6MTC">
    <property type="method" value="EM"/>
    <property type="resolution" value="3.40 A"/>
    <property type="chains" value="f=2-110"/>
</dbReference>
<dbReference type="PDB" id="6MTD">
    <property type="method" value="EM"/>
    <property type="resolution" value="3.30 A"/>
    <property type="chains" value="f=2-110"/>
</dbReference>
<dbReference type="PDB" id="6MTE">
    <property type="method" value="EM"/>
    <property type="resolution" value="3.40 A"/>
    <property type="chains" value="f=2-110"/>
</dbReference>
<dbReference type="PDB" id="6P5I">
    <property type="method" value="EM"/>
    <property type="resolution" value="3.10 A"/>
    <property type="chains" value="Af=1-110"/>
</dbReference>
<dbReference type="PDB" id="6P5J">
    <property type="method" value="EM"/>
    <property type="resolution" value="3.10 A"/>
    <property type="chains" value="Af=1-110"/>
</dbReference>
<dbReference type="PDB" id="6P5K">
    <property type="method" value="EM"/>
    <property type="resolution" value="3.10 A"/>
    <property type="chains" value="Af=1-110"/>
</dbReference>
<dbReference type="PDB" id="6P5N">
    <property type="method" value="EM"/>
    <property type="resolution" value="3.20 A"/>
    <property type="chains" value="Af=1-110"/>
</dbReference>
<dbReference type="PDB" id="6R5Q">
    <property type="method" value="EM"/>
    <property type="resolution" value="3.00 A"/>
    <property type="chains" value="f=2-110"/>
</dbReference>
<dbReference type="PDB" id="6R6G">
    <property type="method" value="EM"/>
    <property type="resolution" value="3.70 A"/>
    <property type="chains" value="f=2-110"/>
</dbReference>
<dbReference type="PDB" id="6R6P">
    <property type="method" value="EM"/>
    <property type="resolution" value="3.10 A"/>
    <property type="chains" value="f=2-110"/>
</dbReference>
<dbReference type="PDB" id="6R7Q">
    <property type="method" value="EM"/>
    <property type="resolution" value="3.90 A"/>
    <property type="chains" value="f=2-110"/>
</dbReference>
<dbReference type="PDB" id="6SGC">
    <property type="method" value="EM"/>
    <property type="resolution" value="2.80 A"/>
    <property type="chains" value="f2=1-110"/>
</dbReference>
<dbReference type="PDB" id="6T59">
    <property type="method" value="EM"/>
    <property type="resolution" value="3.11 A"/>
    <property type="chains" value="f3=1-110"/>
</dbReference>
<dbReference type="PDB" id="6ZVK">
    <property type="method" value="EM"/>
    <property type="resolution" value="3.49 A"/>
    <property type="chains" value="x2=2-110"/>
</dbReference>
<dbReference type="PDB" id="7A01">
    <property type="method" value="EM"/>
    <property type="resolution" value="3.60 A"/>
    <property type="chains" value="x2=2-110"/>
</dbReference>
<dbReference type="PDB" id="7MDZ">
    <property type="method" value="EM"/>
    <property type="resolution" value="3.20 A"/>
    <property type="chains" value="f=1-110"/>
</dbReference>
<dbReference type="PDB" id="7NFX">
    <property type="method" value="EM"/>
    <property type="resolution" value="3.20 A"/>
    <property type="chains" value="f=1-110"/>
</dbReference>
<dbReference type="PDB" id="7NWG">
    <property type="method" value="EM"/>
    <property type="resolution" value="3.80 A"/>
    <property type="chains" value="f3=2-110"/>
</dbReference>
<dbReference type="PDB" id="7NWH">
    <property type="method" value="EM"/>
    <property type="resolution" value="4.10 A"/>
    <property type="chains" value="f=1-110"/>
</dbReference>
<dbReference type="PDB" id="7NWI">
    <property type="method" value="EM"/>
    <property type="resolution" value="3.13 A"/>
    <property type="chains" value="f=2-110"/>
</dbReference>
<dbReference type="PDB" id="7O7Y">
    <property type="method" value="EM"/>
    <property type="resolution" value="2.20 A"/>
    <property type="chains" value="Bf=1-110"/>
</dbReference>
<dbReference type="PDB" id="7O7Z">
    <property type="method" value="EM"/>
    <property type="resolution" value="2.40 A"/>
    <property type="chains" value="Bf=1-110"/>
</dbReference>
<dbReference type="PDB" id="7O80">
    <property type="method" value="EM"/>
    <property type="resolution" value="2.90 A"/>
    <property type="chains" value="Bf=1-110"/>
</dbReference>
<dbReference type="PDB" id="7O81">
    <property type="method" value="EM"/>
    <property type="resolution" value="3.10 A"/>
    <property type="chains" value="Bf=1-110"/>
</dbReference>
<dbReference type="PDB" id="7OBR">
    <property type="method" value="EM"/>
    <property type="resolution" value="2.80 A"/>
    <property type="chains" value="f=1-110"/>
</dbReference>
<dbReference type="PDB" id="7OYD">
    <property type="method" value="EM"/>
    <property type="resolution" value="2.30 A"/>
    <property type="chains" value="f=1-110"/>
</dbReference>
<dbReference type="PDB" id="7QWQ">
    <property type="method" value="EM"/>
    <property type="resolution" value="2.83 A"/>
    <property type="chains" value="f=1-110"/>
</dbReference>
<dbReference type="PDB" id="7QWR">
    <property type="method" value="EM"/>
    <property type="resolution" value="2.90 A"/>
    <property type="chains" value="f=1-110"/>
</dbReference>
<dbReference type="PDB" id="7QWS">
    <property type="method" value="EM"/>
    <property type="resolution" value="3.40 A"/>
    <property type="chains" value="f=1-110"/>
</dbReference>
<dbReference type="PDB" id="7TM3">
    <property type="method" value="EM"/>
    <property type="resolution" value="3.25 A"/>
    <property type="chains" value="f=1-110"/>
</dbReference>
<dbReference type="PDB" id="7TOQ">
    <property type="method" value="EM"/>
    <property type="resolution" value="3.10 A"/>
    <property type="chains" value="AL33=2-110"/>
</dbReference>
<dbReference type="PDB" id="7TOR">
    <property type="method" value="EM"/>
    <property type="resolution" value="2.90 A"/>
    <property type="chains" value="AL33=2-110"/>
</dbReference>
<dbReference type="PDB" id="7TUT">
    <property type="method" value="EM"/>
    <property type="resolution" value="3.88 A"/>
    <property type="chains" value="f=1-110"/>
</dbReference>
<dbReference type="PDB" id="7UCJ">
    <property type="method" value="EM"/>
    <property type="resolution" value="3.10 A"/>
    <property type="chains" value="f=2-110"/>
</dbReference>
<dbReference type="PDB" id="7UCK">
    <property type="method" value="EM"/>
    <property type="resolution" value="2.80 A"/>
    <property type="chains" value="f=2-110"/>
</dbReference>
<dbReference type="PDB" id="7ZJW">
    <property type="method" value="EM"/>
    <property type="resolution" value="2.80 A"/>
    <property type="chains" value="Li=1-110"/>
</dbReference>
<dbReference type="PDB" id="7ZJX">
    <property type="method" value="EM"/>
    <property type="resolution" value="3.10 A"/>
    <property type="chains" value="Li=1-110"/>
</dbReference>
<dbReference type="PDB" id="8B5L">
    <property type="method" value="EM"/>
    <property type="resolution" value="2.86 A"/>
    <property type="chains" value="f=2-110"/>
</dbReference>
<dbReference type="PDB" id="8B6C">
    <property type="method" value="EM"/>
    <property type="resolution" value="2.79 A"/>
    <property type="chains" value="f=2-110"/>
</dbReference>
<dbReference type="PDB" id="8BHF">
    <property type="method" value="EM"/>
    <property type="resolution" value="3.10 A"/>
    <property type="chains" value="S1=2-110"/>
</dbReference>
<dbReference type="PDB" id="8BPO">
    <property type="method" value="EM"/>
    <property type="resolution" value="2.80 A"/>
    <property type="chains" value="e2=1-110"/>
</dbReference>
<dbReference type="PDB" id="8BTK">
    <property type="method" value="EM"/>
    <property type="resolution" value="3.50 A"/>
    <property type="chains" value="Bf=1-110"/>
</dbReference>
<dbReference type="PDB" id="8P2K">
    <property type="method" value="EM"/>
    <property type="resolution" value="2.90 A"/>
    <property type="chains" value="Bf=1-110"/>
</dbReference>
<dbReference type="PDB" id="8RJB">
    <property type="method" value="EM"/>
    <property type="resolution" value="2.69 A"/>
    <property type="chains" value="f=1-110"/>
</dbReference>
<dbReference type="PDB" id="8RJC">
    <property type="method" value="EM"/>
    <property type="resolution" value="2.90 A"/>
    <property type="chains" value="f=1-110"/>
</dbReference>
<dbReference type="PDB" id="8RJD">
    <property type="method" value="EM"/>
    <property type="resolution" value="2.79 A"/>
    <property type="chains" value="f=1-110"/>
</dbReference>
<dbReference type="PDB" id="8SCB">
    <property type="method" value="EM"/>
    <property type="resolution" value="2.50 A"/>
    <property type="chains" value="f=1-110"/>
</dbReference>
<dbReference type="PDB" id="8VFT">
    <property type="method" value="EM"/>
    <property type="resolution" value="3.30 A"/>
    <property type="chains" value="f=1-110"/>
</dbReference>
<dbReference type="PDB" id="9BDL">
    <property type="method" value="EM"/>
    <property type="resolution" value="2.80 A"/>
    <property type="chains" value="AL33=2-110"/>
</dbReference>
<dbReference type="PDB" id="9BDN">
    <property type="method" value="EM"/>
    <property type="resolution" value="3.10 A"/>
    <property type="chains" value="AL33=2-110"/>
</dbReference>
<dbReference type="PDB" id="9BDP">
    <property type="method" value="EM"/>
    <property type="resolution" value="3.70 A"/>
    <property type="chains" value="AL33=2-110"/>
</dbReference>
<dbReference type="PDB" id="9F1B">
    <property type="method" value="EM"/>
    <property type="resolution" value="3.01 A"/>
    <property type="chains" value="Bf=1-110"/>
</dbReference>
<dbReference type="PDB" id="9F1C">
    <property type="method" value="EM"/>
    <property type="resolution" value="3.78 A"/>
    <property type="chains" value="Bf=1-110"/>
</dbReference>
<dbReference type="PDB" id="9F1D">
    <property type="method" value="EM"/>
    <property type="resolution" value="3.26 A"/>
    <property type="chains" value="Bf=1-110"/>
</dbReference>
<dbReference type="PDBsum" id="3JAG"/>
<dbReference type="PDBsum" id="3JAH"/>
<dbReference type="PDBsum" id="3JAI"/>
<dbReference type="PDBsum" id="5LZS"/>
<dbReference type="PDBsum" id="5LZT"/>
<dbReference type="PDBsum" id="5LZU"/>
<dbReference type="PDBsum" id="5LZV"/>
<dbReference type="PDBsum" id="5LZW"/>
<dbReference type="PDBsum" id="5LZX"/>
<dbReference type="PDBsum" id="5LZY"/>
<dbReference type="PDBsum" id="5LZZ"/>
<dbReference type="PDBsum" id="6D90"/>
<dbReference type="PDBsum" id="6D9J"/>
<dbReference type="PDBsum" id="6FTG"/>
<dbReference type="PDBsum" id="6FTI"/>
<dbReference type="PDBsum" id="6FTJ"/>
<dbReference type="PDBsum" id="6HCF"/>
<dbReference type="PDBsum" id="6HCJ"/>
<dbReference type="PDBsum" id="6HCM"/>
<dbReference type="PDBsum" id="6HCQ"/>
<dbReference type="PDBsum" id="6MTB"/>
<dbReference type="PDBsum" id="6MTC"/>
<dbReference type="PDBsum" id="6MTD"/>
<dbReference type="PDBsum" id="6MTE"/>
<dbReference type="PDBsum" id="6P5I"/>
<dbReference type="PDBsum" id="6P5J"/>
<dbReference type="PDBsum" id="6P5K"/>
<dbReference type="PDBsum" id="6P5N"/>
<dbReference type="PDBsum" id="6R5Q"/>
<dbReference type="PDBsum" id="6R6G"/>
<dbReference type="PDBsum" id="6R6P"/>
<dbReference type="PDBsum" id="6R7Q"/>
<dbReference type="PDBsum" id="6SGC"/>
<dbReference type="PDBsum" id="6T59"/>
<dbReference type="PDBsum" id="6ZVK"/>
<dbReference type="PDBsum" id="7A01"/>
<dbReference type="PDBsum" id="7MDZ"/>
<dbReference type="PDBsum" id="7NFX"/>
<dbReference type="PDBsum" id="7NWG"/>
<dbReference type="PDBsum" id="7NWH"/>
<dbReference type="PDBsum" id="7NWI"/>
<dbReference type="PDBsum" id="7O7Y"/>
<dbReference type="PDBsum" id="7O7Z"/>
<dbReference type="PDBsum" id="7O80"/>
<dbReference type="PDBsum" id="7O81"/>
<dbReference type="PDBsum" id="7OBR"/>
<dbReference type="PDBsum" id="7OYD"/>
<dbReference type="PDBsum" id="7QWQ"/>
<dbReference type="PDBsum" id="7QWR"/>
<dbReference type="PDBsum" id="7QWS"/>
<dbReference type="PDBsum" id="7TM3"/>
<dbReference type="PDBsum" id="7TOQ"/>
<dbReference type="PDBsum" id="7TOR"/>
<dbReference type="PDBsum" id="7TUT"/>
<dbReference type="PDBsum" id="7UCJ"/>
<dbReference type="PDBsum" id="7UCK"/>
<dbReference type="PDBsum" id="7ZJW"/>
<dbReference type="PDBsum" id="7ZJX"/>
<dbReference type="PDBsum" id="8B5L"/>
<dbReference type="PDBsum" id="8B6C"/>
<dbReference type="PDBsum" id="8BHF"/>
<dbReference type="PDBsum" id="8BPO"/>
<dbReference type="PDBsum" id="8BTK"/>
<dbReference type="PDBsum" id="8P2K"/>
<dbReference type="PDBsum" id="8RJB"/>
<dbReference type="PDBsum" id="8RJC"/>
<dbReference type="PDBsum" id="8RJD"/>
<dbReference type="PDBsum" id="8SCB"/>
<dbReference type="PDBsum" id="8VFT"/>
<dbReference type="PDBsum" id="9BDL"/>
<dbReference type="PDBsum" id="9BDN"/>
<dbReference type="PDBsum" id="9BDP"/>
<dbReference type="PDBsum" id="9F1B"/>
<dbReference type="PDBsum" id="9F1C"/>
<dbReference type="PDBsum" id="9F1D"/>
<dbReference type="EMDB" id="EMD-0099"/>
<dbReference type="EMDB" id="EMD-0100"/>
<dbReference type="EMDB" id="EMD-0192"/>
<dbReference type="EMDB" id="EMD-0194"/>
<dbReference type="EMDB" id="EMD-0195"/>
<dbReference type="EMDB" id="EMD-0197"/>
<dbReference type="EMDB" id="EMD-10181"/>
<dbReference type="EMDB" id="EMD-10380"/>
<dbReference type="EMDB" id="EMD-11459"/>
<dbReference type="EMDB" id="EMD-11590"/>
<dbReference type="EMDB" id="EMD-12303"/>
<dbReference type="EMDB" id="EMD-12631"/>
<dbReference type="EMDB" id="EMD-12632"/>
<dbReference type="EMDB" id="EMD-12633"/>
<dbReference type="EMDB" id="EMD-12756"/>
<dbReference type="EMDB" id="EMD-12757"/>
<dbReference type="EMDB" id="EMD-12758"/>
<dbReference type="EMDB" id="EMD-12759"/>
<dbReference type="EMDB" id="EMD-12801"/>
<dbReference type="EMDB" id="EMD-13114"/>
<dbReference type="EMDB" id="EMD-14191"/>
<dbReference type="EMDB" id="EMD-14192"/>
<dbReference type="EMDB" id="EMD-14193"/>
<dbReference type="EMDB" id="EMD-14751"/>
<dbReference type="EMDB" id="EMD-14752"/>
<dbReference type="EMDB" id="EMD-15860"/>
<dbReference type="EMDB" id="EMD-15863"/>
<dbReference type="EMDB" id="EMD-16052"/>
<dbReference type="EMDB" id="EMD-16155"/>
<dbReference type="EMDB" id="EMD-16232"/>
<dbReference type="EMDB" id="EMD-17367"/>
<dbReference type="EMDB" id="EMD-19195"/>
<dbReference type="EMDB" id="EMD-19197"/>
<dbReference type="EMDB" id="EMD-19198"/>
<dbReference type="EMDB" id="EMD-20255"/>
<dbReference type="EMDB" id="EMD-20256"/>
<dbReference type="EMDB" id="EMD-20257"/>
<dbReference type="EMDB" id="EMD-20258"/>
<dbReference type="EMDB" id="EMD-23785"/>
<dbReference type="EMDB" id="EMD-25994"/>
<dbReference type="EMDB" id="EMD-26035"/>
<dbReference type="EMDB" id="EMD-26036"/>
<dbReference type="EMDB" id="EMD-26133"/>
<dbReference type="EMDB" id="EMD-26444"/>
<dbReference type="EMDB" id="EMD-26445"/>
<dbReference type="EMDB" id="EMD-40344"/>
<dbReference type="EMDB" id="EMD-4130"/>
<dbReference type="EMDB" id="EMD-4131"/>
<dbReference type="EMDB" id="EMD-4132"/>
<dbReference type="EMDB" id="EMD-4133"/>
<dbReference type="EMDB" id="EMD-4134"/>
<dbReference type="EMDB" id="EMD-4135"/>
<dbReference type="EMDB" id="EMD-4136"/>
<dbReference type="EMDB" id="EMD-4137"/>
<dbReference type="EMDB" id="EMD-4300"/>
<dbReference type="EMDB" id="EMD-4315"/>
<dbReference type="EMDB" id="EMD-4316"/>
<dbReference type="EMDB" id="EMD-4317"/>
<dbReference type="EMDB" id="EMD-43189"/>
<dbReference type="EMDB" id="EMD-44461"/>
<dbReference type="EMDB" id="EMD-44463"/>
<dbReference type="EMDB" id="EMD-44464"/>
<dbReference type="EMDB" id="EMD-4729"/>
<dbReference type="EMDB" id="EMD-4735"/>
<dbReference type="EMDB" id="EMD-4737"/>
<dbReference type="EMDB" id="EMD-4745"/>
<dbReference type="EMDB" id="EMD-50124"/>
<dbReference type="EMDB" id="EMD-50125"/>
<dbReference type="EMDB" id="EMD-50126"/>
<dbReference type="EMDB" id="EMD-7834"/>
<dbReference type="EMDB" id="EMD-7836"/>
<dbReference type="EMDB" id="EMD-9237"/>
<dbReference type="EMDB" id="EMD-9239"/>
<dbReference type="EMDB" id="EMD-9240"/>
<dbReference type="EMDB" id="EMD-9242"/>
<dbReference type="SMR" id="G1SF08"/>
<dbReference type="FunCoup" id="G1SF08">
    <property type="interactions" value="660"/>
</dbReference>
<dbReference type="IntAct" id="G1SF08">
    <property type="interactions" value="1"/>
</dbReference>
<dbReference type="STRING" id="9986.ENSOCUP00000001066"/>
<dbReference type="PaxDb" id="9986-ENSOCUP00000001066"/>
<dbReference type="Ensembl" id="ENSOCUT00000001231.3">
    <property type="protein sequence ID" value="ENSOCUP00000001066.2"/>
    <property type="gene ID" value="ENSOCUG00000001232.3"/>
</dbReference>
<dbReference type="GeneID" id="100343484"/>
<dbReference type="KEGG" id="ocu:100343484"/>
<dbReference type="CTD" id="6165"/>
<dbReference type="eggNOG" id="KOG0887">
    <property type="taxonomic scope" value="Eukaryota"/>
</dbReference>
<dbReference type="GeneTree" id="ENSGT00390000016972"/>
<dbReference type="HOGENOM" id="CLU_100745_5_0_1"/>
<dbReference type="InParanoid" id="G1SF08"/>
<dbReference type="OMA" id="YRTNKHH"/>
<dbReference type="OrthoDB" id="1166329at2759"/>
<dbReference type="TreeFam" id="TF300104"/>
<dbReference type="Proteomes" id="UP000001811">
    <property type="component" value="Chromosome 14"/>
</dbReference>
<dbReference type="Bgee" id="ENSOCUG00000001232">
    <property type="expression patterns" value="Expressed in embryo and 15 other cell types or tissues"/>
</dbReference>
<dbReference type="GO" id="GO:0022625">
    <property type="term" value="C:cytosolic large ribosomal subunit"/>
    <property type="evidence" value="ECO:0007669"/>
    <property type="project" value="Ensembl"/>
</dbReference>
<dbReference type="GO" id="GO:0045202">
    <property type="term" value="C:synapse"/>
    <property type="evidence" value="ECO:0007669"/>
    <property type="project" value="Ensembl"/>
</dbReference>
<dbReference type="GO" id="GO:0003735">
    <property type="term" value="F:structural constituent of ribosome"/>
    <property type="evidence" value="ECO:0007669"/>
    <property type="project" value="Ensembl"/>
</dbReference>
<dbReference type="GO" id="GO:0000049">
    <property type="term" value="F:tRNA binding"/>
    <property type="evidence" value="ECO:0007669"/>
    <property type="project" value="UniProtKB-KW"/>
</dbReference>
<dbReference type="GO" id="GO:0006412">
    <property type="term" value="P:translation"/>
    <property type="evidence" value="ECO:0007669"/>
    <property type="project" value="InterPro"/>
</dbReference>
<dbReference type="FunFam" id="2.40.10.190:FF:000005">
    <property type="entry name" value="60S ribosomal protein L35a"/>
    <property type="match status" value="1"/>
</dbReference>
<dbReference type="Gene3D" id="2.40.10.190">
    <property type="entry name" value="translation elongation factor selb, chain A, domain 4"/>
    <property type="match status" value="1"/>
</dbReference>
<dbReference type="HAMAP" id="MF_00573">
    <property type="entry name" value="Ribosomal_eL33"/>
    <property type="match status" value="1"/>
</dbReference>
<dbReference type="InterPro" id="IPR001780">
    <property type="entry name" value="Ribosomal_eL33"/>
</dbReference>
<dbReference type="InterPro" id="IPR018266">
    <property type="entry name" value="Ribosomal_eL33_CS"/>
</dbReference>
<dbReference type="InterPro" id="IPR038661">
    <property type="entry name" value="Ribosomal_eL33_sf"/>
</dbReference>
<dbReference type="InterPro" id="IPR009000">
    <property type="entry name" value="Transl_B-barrel_sf"/>
</dbReference>
<dbReference type="PANTHER" id="PTHR10902">
    <property type="entry name" value="60S RIBOSOMAL PROTEIN L35A"/>
    <property type="match status" value="1"/>
</dbReference>
<dbReference type="Pfam" id="PF01247">
    <property type="entry name" value="Ribosomal_L35Ae"/>
    <property type="match status" value="1"/>
</dbReference>
<dbReference type="SUPFAM" id="SSF50447">
    <property type="entry name" value="Translation proteins"/>
    <property type="match status" value="1"/>
</dbReference>
<dbReference type="PROSITE" id="PS01105">
    <property type="entry name" value="RIBOSOMAL_L35AE"/>
    <property type="match status" value="1"/>
</dbReference>
<keyword id="KW-0002">3D-structure</keyword>
<keyword id="KW-0007">Acetylation</keyword>
<keyword id="KW-0963">Cytoplasm</keyword>
<keyword id="KW-1185">Reference proteome</keyword>
<keyword id="KW-0687">Ribonucleoprotein</keyword>
<keyword id="KW-0689">Ribosomal protein</keyword>
<keyword id="KW-0694">RNA-binding</keyword>
<keyword id="KW-0820">tRNA-binding</keyword>
<proteinExistence type="evidence at protein level"/>
<name>RL35A_RABIT</name>
<organism>
    <name type="scientific">Oryctolagus cuniculus</name>
    <name type="common">Rabbit</name>
    <dbReference type="NCBI Taxonomy" id="9986"/>
    <lineage>
        <taxon>Eukaryota</taxon>
        <taxon>Metazoa</taxon>
        <taxon>Chordata</taxon>
        <taxon>Craniata</taxon>
        <taxon>Vertebrata</taxon>
        <taxon>Euteleostomi</taxon>
        <taxon>Mammalia</taxon>
        <taxon>Eutheria</taxon>
        <taxon>Euarchontoglires</taxon>
        <taxon>Glires</taxon>
        <taxon>Lagomorpha</taxon>
        <taxon>Leporidae</taxon>
        <taxon>Oryctolagus</taxon>
    </lineage>
</organism>
<sequence>MSGRLWCKAIFAGYKRGLRNQREHTALLKIEGVYARDETEFYLGKRCAYVYKAKNNTVTPGGKPNKTRVIWGKVTRAHGNSGMVRAKFRSNLPAKAIGHRIRVMLYPSRI</sequence>
<accession>G1SF08</accession>
<comment type="function">
    <text evidence="2 3 4">Component of the large ribosomal subunit (PubMed:26245381, PubMed:27863242). The ribosome is a large ribonucleoprotein complex responsible for the synthesis of proteins in the cell (PubMed:26245381, PubMed:27863242). Required for the proliferation and viability of hematopoietic cells (By similarity).</text>
</comment>
<comment type="subunit">
    <text evidence="3 4 5 6 7 8 9 10 11 12 13 14">Component of the large ribosomal subunit.</text>
</comment>
<comment type="subcellular location">
    <subcellularLocation>
        <location evidence="3 4 5 6 7 8 9 10 11 12 13 14">Cytoplasm</location>
    </subcellularLocation>
</comment>
<comment type="similarity">
    <text evidence="15">Belongs to the eukaryotic ribosomal protein eL33 family.</text>
</comment>
<reference key="1">
    <citation type="journal article" date="2011" name="Nature">
        <title>A high-resolution map of human evolutionary constraint using 29 mammals.</title>
        <authorList>
            <person name="Lindblad-Toh K."/>
            <person name="Garber M."/>
            <person name="Zuk O."/>
            <person name="Lin M.F."/>
            <person name="Parker B.J."/>
            <person name="Washietl S."/>
            <person name="Kheradpour P."/>
            <person name="Ernst J."/>
            <person name="Jordan G."/>
            <person name="Mauceli E."/>
            <person name="Ward L.D."/>
            <person name="Lowe C.B."/>
            <person name="Holloway A.K."/>
            <person name="Clamp M."/>
            <person name="Gnerre S."/>
            <person name="Alfoldi J."/>
            <person name="Beal K."/>
            <person name="Chang J."/>
            <person name="Clawson H."/>
            <person name="Cuff J."/>
            <person name="Di Palma F."/>
            <person name="Fitzgerald S."/>
            <person name="Flicek P."/>
            <person name="Guttman M."/>
            <person name="Hubisz M.J."/>
            <person name="Jaffe D.B."/>
            <person name="Jungreis I."/>
            <person name="Kent W.J."/>
            <person name="Kostka D."/>
            <person name="Lara M."/>
            <person name="Martins A.L."/>
            <person name="Massingham T."/>
            <person name="Moltke I."/>
            <person name="Raney B.J."/>
            <person name="Rasmussen M.D."/>
            <person name="Robinson J."/>
            <person name="Stark A."/>
            <person name="Vilella A.J."/>
            <person name="Wen J."/>
            <person name="Xie X."/>
            <person name="Zody M.C."/>
            <person name="Baldwin J."/>
            <person name="Bloom T."/>
            <person name="Chin C.W."/>
            <person name="Heiman D."/>
            <person name="Nicol R."/>
            <person name="Nusbaum C."/>
            <person name="Young S."/>
            <person name="Wilkinson J."/>
            <person name="Worley K.C."/>
            <person name="Kovar C.L."/>
            <person name="Muzny D.M."/>
            <person name="Gibbs R.A."/>
            <person name="Cree A."/>
            <person name="Dihn H.H."/>
            <person name="Fowler G."/>
            <person name="Jhangiani S."/>
            <person name="Joshi V."/>
            <person name="Lee S."/>
            <person name="Lewis L.R."/>
            <person name="Nazareth L.V."/>
            <person name="Okwuonu G."/>
            <person name="Santibanez J."/>
            <person name="Warren W.C."/>
            <person name="Mardis E.R."/>
            <person name="Weinstock G.M."/>
            <person name="Wilson R.K."/>
            <person name="Delehaunty K."/>
            <person name="Dooling D."/>
            <person name="Fronik C."/>
            <person name="Fulton L."/>
            <person name="Fulton B."/>
            <person name="Graves T."/>
            <person name="Minx P."/>
            <person name="Sodergren E."/>
            <person name="Birney E."/>
            <person name="Margulies E.H."/>
            <person name="Herrero J."/>
            <person name="Green E.D."/>
            <person name="Haussler D."/>
            <person name="Siepel A."/>
            <person name="Goldman N."/>
            <person name="Pollard K.S."/>
            <person name="Pedersen J.S."/>
            <person name="Lander E.S."/>
            <person name="Kellis M."/>
        </authorList>
    </citation>
    <scope>NUCLEOTIDE SEQUENCE [LARGE SCALE GENOMIC DNA]</scope>
    <source>
        <strain>Thorbecke</strain>
    </source>
</reference>
<reference evidence="16 17" key="2">
    <citation type="journal article" date="2015" name="Nature">
        <title>Structural basis for stop codon recognition in eukaryotes.</title>
        <authorList>
            <person name="Brown A."/>
            <person name="Shao S."/>
            <person name="Murray J."/>
            <person name="Hegde R.S."/>
            <person name="Ramakrishnan V."/>
        </authorList>
    </citation>
    <scope>STRUCTURE BY ELECTRON MICROSCOPY (3.45 ANGSTROMS) OF 2-110 OF RIBOSOME</scope>
    <scope>FUNCTION</scope>
    <scope>SUBCELLULAR LOCATION</scope>
    <scope>SUBUNIT</scope>
</reference>
<reference evidence="18 19" key="3">
    <citation type="journal article" date="2016" name="Cell">
        <title>Decoding mammalian ribosome-mRNA states by translational GTPase complexes.</title>
        <authorList>
            <person name="Shao S."/>
            <person name="Murray J."/>
            <person name="Brown A."/>
            <person name="Taunton J."/>
            <person name="Ramakrishnan V."/>
            <person name="Hegde R.S."/>
        </authorList>
    </citation>
    <scope>STRUCTURE BY ELECTRON MICROSCOPY (3.31 ANGSTROMS) OF RIBOSOME</scope>
    <scope>FUNCTION</scope>
    <scope>SUBCELLULAR LOCATION</scope>
    <scope>SUBUNIT</scope>
</reference>
<reference evidence="20 21" key="4">
    <citation type="journal article" date="2018" name="Elife">
        <title>Dual tRNA mimicry in the Cricket paralysis virus IRES uncovers an unexpected similarity with the Hepatitis C Virus IRES.</title>
        <authorList>
            <person name="Pisareva V.P."/>
            <person name="Pisarev A.V."/>
            <person name="Fernandez I.S."/>
        </authorList>
    </citation>
    <scope>STRUCTURE BY ELECTRON MICROSCOPY (3.20 ANGSTROMS) OF RIBOSOME</scope>
    <scope>SUBCELLULAR LOCATION</scope>
    <scope>SUBUNIT</scope>
</reference>
<reference evidence="24 25" key="5">
    <citation type="journal article" date="2018" name="Elife">
        <title>Structures of translationally inactive mammalian ribosomes.</title>
        <authorList>
            <person name="Brown A."/>
            <person name="Baird M.R."/>
            <person name="Yip M.C."/>
            <person name="Murray J."/>
            <person name="Shao S."/>
        </authorList>
    </citation>
    <scope>STRUCTURE BY ELECTRON MICROSCOPY (3.30 ANGSTROMS) OF 2-110 OF RIBOSOME</scope>
    <scope>SUBCELLULAR LOCATION</scope>
    <scope>SUBUNIT</scope>
</reference>
<reference evidence="22 23" key="6">
    <citation type="journal article" date="2018" name="Mol. Cell">
        <title>ZNF598 is a quality control sensor of collided ribosomes.</title>
        <authorList>
            <person name="Juszkiewicz S."/>
            <person name="Chandrasekaran V."/>
            <person name="Lin Z."/>
            <person name="Kraatz S."/>
            <person name="Ramakrishnan V."/>
            <person name="Hegde R.S."/>
        </authorList>
    </citation>
    <scope>STRUCTURE BY ELECTRON MICROSCOPY (3.80 ANGSTROMS) OF RIBOSOME</scope>
    <scope>SUBCELLULAR LOCATION</scope>
    <scope>SUBUNIT</scope>
</reference>
<reference evidence="28 29" key="7">
    <citation type="journal article" date="2019" name="Elife">
        <title>Structural and mutational analysis of the ribosome-arresting human XBP1u.</title>
        <authorList>
            <person name="Shanmuganathan V."/>
            <person name="Schiller N."/>
            <person name="Magoulopoulou A."/>
            <person name="Cheng J."/>
            <person name="Braunger K."/>
            <person name="Cymer F."/>
            <person name="Berninghausen O."/>
            <person name="Beatrix B."/>
            <person name="Kohno K."/>
            <person name="von Heijne G."/>
            <person name="Beckmann R."/>
        </authorList>
    </citation>
    <scope>STRUCTURE BY ELECTRON MICROSCOPY (3.00 ANGSTROMS) OF 2-110 OF RIBOSOME</scope>
    <scope>SUBCELLULAR LOCATION</scope>
    <scope>SUBUNIT</scope>
</reference>
<reference evidence="26 27" key="8">
    <citation type="journal article" date="2019" name="EMBO J.">
        <title>The Israeli acute paralysis virus IRES captures host ribosomes by mimicking a ribosomal state with hybrid tRNAs.</title>
        <authorList>
            <person name="Acosta-Reyes F."/>
            <person name="Neupane R."/>
            <person name="Frank J."/>
            <person name="Fernandez I.S."/>
        </authorList>
    </citation>
    <scope>STRUCTURE BY ELECTRON MICROSCOPY (3.10 ANGSTROMS) OF RIBOSOME</scope>
    <scope>SUBCELLULAR LOCATION</scope>
    <scope>SUBUNIT</scope>
</reference>
<reference evidence="30" key="9">
    <citation type="journal article" date="2019" name="Nat. Struct. Mol. Biol.">
        <title>Mechanism of ribosome stalling during translation of a poly(A) tail.</title>
        <authorList>
            <person name="Chandrasekaran V."/>
            <person name="Juszkiewicz S."/>
            <person name="Choi J."/>
            <person name="Puglisi J.D."/>
            <person name="Brown A."/>
            <person name="Shao S."/>
            <person name="Ramakrishnan V."/>
            <person name="Hegde R.S."/>
        </authorList>
    </citation>
    <scope>STRUCTURE BY ELECTRON MICROSCOPY (2.80 ANGSTROMS) OF RIBOSOME</scope>
    <scope>SUBCELLULAR LOCATION</scope>
    <scope>SUBUNIT</scope>
</reference>
<reference evidence="31 32" key="10">
    <citation type="journal article" date="2020" name="Cell Rep.">
        <title>The Halastavi arva virus intergenic region IRES promotes translation by the simplest possible initiation mechanism.</title>
        <authorList>
            <person name="Abaeva I.S."/>
            <person name="Vicens Q."/>
            <person name="Bochler A."/>
            <person name="Soufari H."/>
            <person name="Simonetti A."/>
            <person name="Pestova T.V."/>
            <person name="Hashem Y."/>
            <person name="Hellen C.U.T."/>
        </authorList>
    </citation>
    <scope>STRUCTURE BY ELECTRON MICROSCOPY (3.49 ANGSTROMS) OF 2-110 OF RIBOSOME</scope>
    <scope>SUBCELLULAR LOCATION</scope>
    <scope>SUBUNIT</scope>
</reference>
<reference evidence="34 35" key="11">
    <citation type="journal article" date="2022" name="Mol. Cell">
        <title>Direct epitranscriptomic regulation of mammalian translation initiation through N4-acetylcytidine.</title>
        <authorList>
            <person name="Arango D."/>
            <person name="Sturgill D."/>
            <person name="Yang R."/>
            <person name="Kanai T."/>
            <person name="Bauer P."/>
            <person name="Roy J."/>
            <person name="Wang Z."/>
            <person name="Hosogane M."/>
            <person name="Schiffers S."/>
            <person name="Oberdoerffer S."/>
        </authorList>
    </citation>
    <scope>STRUCTURE BY ELECTRON MICROSCOPY (2.80 ANGSTROMS) OF 2-110 OF RIBOSOME</scope>
    <scope>SUBCELLULAR LOCATION</scope>
    <scope>SUBUNIT</scope>
</reference>
<reference evidence="36 37" key="12">
    <citation type="journal article" date="2022" name="Science">
        <title>Structure of the mammalian ribosome as it decodes the selenocysteine UGA codon.</title>
        <authorList>
            <person name="Hilal T."/>
            <person name="Killam B.Y."/>
            <person name="Grozdanovic M."/>
            <person name="Dobosz-Bartoszek M."/>
            <person name="Loerke J."/>
            <person name="Buerger J."/>
            <person name="Mielke T."/>
            <person name="Copeland P.R."/>
            <person name="Simonovic M."/>
            <person name="Spahn C.M.T."/>
        </authorList>
    </citation>
    <scope>STRUCTURE BY ELECTRON MICROSCOPY (2.80 ANGSTROMS) OF RIBOSOME</scope>
    <scope>SUBCELLULAR LOCATION</scope>
    <scope>SUBUNIT</scope>
</reference>
<reference evidence="33" key="13">
    <citation type="journal article" date="2023" name="Nature">
        <title>A molecular network of conserved factors keeps ribosomes dormant in the egg.</title>
        <authorList>
            <person name="Leesch F."/>
            <person name="Lorenzo-Orts L."/>
            <person name="Pribitzer C."/>
            <person name="Grishkovskaya I."/>
            <person name="Roehsner J."/>
            <person name="Chugunova A."/>
            <person name="Matzinger M."/>
            <person name="Roitinger E."/>
            <person name="Belacic K."/>
            <person name="Kandolf S."/>
            <person name="Lin T.Y."/>
            <person name="Mechtler K."/>
            <person name="Meinhart A."/>
            <person name="Haselbach D."/>
            <person name="Pauli A."/>
        </authorList>
    </citation>
    <scope>STRUCTURE BY ELECTRON MICROSCOPY (2.30 ANGSTROMS) OF RIBOSOME</scope>
    <scope>SUBCELLULAR LOCATION</scope>
    <scope>SUBUNIT</scope>
</reference>